<feature type="chain" id="PRO_0000313860" description="tRNA (cytidine/uridine-2'-O-)-methyltransferase TrmJ">
    <location>
        <begin position="1"/>
        <end position="243"/>
    </location>
</feature>
<feature type="binding site" evidence="1">
    <location>
        <begin position="79"/>
        <end position="81"/>
    </location>
    <ligand>
        <name>S-adenosyl-L-methionine</name>
        <dbReference type="ChEBI" id="CHEBI:59789"/>
    </ligand>
</feature>
<feature type="binding site" evidence="1">
    <location>
        <position position="114"/>
    </location>
    <ligand>
        <name>S-adenosyl-L-methionine</name>
        <dbReference type="ChEBI" id="CHEBI:59789"/>
    </ligand>
</feature>
<feature type="binding site" evidence="1">
    <location>
        <position position="134"/>
    </location>
    <ligand>
        <name>S-adenosyl-L-methionine</name>
        <dbReference type="ChEBI" id="CHEBI:59789"/>
    </ligand>
</feature>
<feature type="binding site" evidence="1">
    <location>
        <begin position="141"/>
        <end position="143"/>
    </location>
    <ligand>
        <name>S-adenosyl-L-methionine</name>
        <dbReference type="ChEBI" id="CHEBI:59789"/>
    </ligand>
</feature>
<name>TRMJ_SALPA</name>
<evidence type="ECO:0000250" key="1">
    <source>
        <dbReference type="UniProtKB" id="P0AE01"/>
    </source>
</evidence>
<evidence type="ECO:0000305" key="2"/>
<keyword id="KW-0963">Cytoplasm</keyword>
<keyword id="KW-0489">Methyltransferase</keyword>
<keyword id="KW-0949">S-adenosyl-L-methionine</keyword>
<keyword id="KW-0808">Transferase</keyword>
<keyword id="KW-0819">tRNA processing</keyword>
<proteinExistence type="inferred from homology"/>
<protein>
    <recommendedName>
        <fullName evidence="1">tRNA (cytidine/uridine-2'-O-)-methyltransferase TrmJ</fullName>
        <ecNumber evidence="1">2.1.1.200</ecNumber>
    </recommendedName>
    <alternativeName>
        <fullName evidence="1">tRNA (cytidine(32)/uridine(32)-2'-O)-methyltransferase</fullName>
    </alternativeName>
    <alternativeName>
        <fullName evidence="1">tRNA Cm32/Um32 methyltransferase</fullName>
    </alternativeName>
</protein>
<organism>
    <name type="scientific">Salmonella paratyphi A (strain ATCC 9150 / SARB42)</name>
    <dbReference type="NCBI Taxonomy" id="295319"/>
    <lineage>
        <taxon>Bacteria</taxon>
        <taxon>Pseudomonadati</taxon>
        <taxon>Pseudomonadota</taxon>
        <taxon>Gammaproteobacteria</taxon>
        <taxon>Enterobacterales</taxon>
        <taxon>Enterobacteriaceae</taxon>
        <taxon>Salmonella</taxon>
    </lineage>
</organism>
<accession>Q5PNG3</accession>
<comment type="function">
    <text evidence="1">Catalyzes the formation of 2'O-methylated cytidine (Cm32) or 2'O-methylated uridine (Um32) at position 32 in tRNA.</text>
</comment>
<comment type="catalytic activity">
    <reaction evidence="1">
        <text>cytidine(32) in tRNA + S-adenosyl-L-methionine = 2'-O-methylcytidine(32) in tRNA + S-adenosyl-L-homocysteine + H(+)</text>
        <dbReference type="Rhea" id="RHEA:42932"/>
        <dbReference type="Rhea" id="RHEA-COMP:10288"/>
        <dbReference type="Rhea" id="RHEA-COMP:10289"/>
        <dbReference type="ChEBI" id="CHEBI:15378"/>
        <dbReference type="ChEBI" id="CHEBI:57856"/>
        <dbReference type="ChEBI" id="CHEBI:59789"/>
        <dbReference type="ChEBI" id="CHEBI:74495"/>
        <dbReference type="ChEBI" id="CHEBI:82748"/>
        <dbReference type="EC" id="2.1.1.200"/>
    </reaction>
</comment>
<comment type="catalytic activity">
    <reaction evidence="1">
        <text>uridine(32) in tRNA + S-adenosyl-L-methionine = 2'-O-methyluridine(32) in tRNA + S-adenosyl-L-homocysteine + H(+)</text>
        <dbReference type="Rhea" id="RHEA:42936"/>
        <dbReference type="Rhea" id="RHEA-COMP:10107"/>
        <dbReference type="Rhea" id="RHEA-COMP:10290"/>
        <dbReference type="ChEBI" id="CHEBI:15378"/>
        <dbReference type="ChEBI" id="CHEBI:57856"/>
        <dbReference type="ChEBI" id="CHEBI:59789"/>
        <dbReference type="ChEBI" id="CHEBI:65315"/>
        <dbReference type="ChEBI" id="CHEBI:74478"/>
        <dbReference type="EC" id="2.1.1.200"/>
    </reaction>
</comment>
<comment type="subunit">
    <text evidence="1">Homodimer.</text>
</comment>
<comment type="subcellular location">
    <subcellularLocation>
        <location evidence="1">Cytoplasm</location>
    </subcellularLocation>
</comment>
<comment type="similarity">
    <text evidence="2">Belongs to the class IV-like SAM-binding methyltransferase superfamily. RNA methyltransferase TrmH family.</text>
</comment>
<sequence length="243" mass="26613">MLQNIRIVLVETSHTGNMGSVARAMKTMGLTNLWLVNPLVKPDSQAIALAAGASDVIGNAQIVDTLDEALAGCSLVVGTSARSRTLPWPMLDPRECGLKSVAEAANTPVALVFGRERVGLTNDELQKCHYHVAIAANPEYSSLNLAMAVQVIAYEVRMAWLATQENGDAADHEETPYPLVDDLERFYGHLEQTLLSTGFIRENHPGQVMNKLRRLFTRARPESQELNILRGILASIEQQNKGK</sequence>
<dbReference type="EC" id="2.1.1.200" evidence="1"/>
<dbReference type="EMBL" id="CP000026">
    <property type="protein sequence ID" value="AAV76340.1"/>
    <property type="molecule type" value="Genomic_DNA"/>
</dbReference>
<dbReference type="RefSeq" id="WP_000940032.1">
    <property type="nucleotide sequence ID" value="NC_006511.1"/>
</dbReference>
<dbReference type="SMR" id="Q5PNG3"/>
<dbReference type="KEGG" id="spt:SPA0321"/>
<dbReference type="HOGENOM" id="CLU_056931_0_1_6"/>
<dbReference type="Proteomes" id="UP000008185">
    <property type="component" value="Chromosome"/>
</dbReference>
<dbReference type="GO" id="GO:0005829">
    <property type="term" value="C:cytosol"/>
    <property type="evidence" value="ECO:0007669"/>
    <property type="project" value="TreeGrafter"/>
</dbReference>
<dbReference type="GO" id="GO:0003723">
    <property type="term" value="F:RNA binding"/>
    <property type="evidence" value="ECO:0007669"/>
    <property type="project" value="InterPro"/>
</dbReference>
<dbReference type="GO" id="GO:0160206">
    <property type="term" value="F:tRNA (cytidine(32)/uridine(32)-2'-O)-methyltransferase activity"/>
    <property type="evidence" value="ECO:0007669"/>
    <property type="project" value="UniProtKB-EC"/>
</dbReference>
<dbReference type="GO" id="GO:0002128">
    <property type="term" value="P:tRNA nucleoside ribose methylation"/>
    <property type="evidence" value="ECO:0007669"/>
    <property type="project" value="TreeGrafter"/>
</dbReference>
<dbReference type="CDD" id="cd18093">
    <property type="entry name" value="SpoU-like_TrmJ"/>
    <property type="match status" value="1"/>
</dbReference>
<dbReference type="FunFam" id="1.10.8.590:FF:000001">
    <property type="entry name" value="tRNA:Cm32/Um32 methyltransferase"/>
    <property type="match status" value="1"/>
</dbReference>
<dbReference type="FunFam" id="3.40.1280.10:FF:000006">
    <property type="entry name" value="Uncharacterized tRNA/rRNA methyltransferase HI_0380"/>
    <property type="match status" value="1"/>
</dbReference>
<dbReference type="Gene3D" id="1.10.8.590">
    <property type="match status" value="1"/>
</dbReference>
<dbReference type="Gene3D" id="3.40.1280.10">
    <property type="match status" value="1"/>
</dbReference>
<dbReference type="InterPro" id="IPR029028">
    <property type="entry name" value="Alpha/beta_knot_MTases"/>
</dbReference>
<dbReference type="InterPro" id="IPR004384">
    <property type="entry name" value="RNA_MeTrfase_TrmJ/LasT"/>
</dbReference>
<dbReference type="InterPro" id="IPR001537">
    <property type="entry name" value="SpoU_MeTrfase"/>
</dbReference>
<dbReference type="InterPro" id="IPR029026">
    <property type="entry name" value="tRNA_m1G_MTases_N"/>
</dbReference>
<dbReference type="NCBIfam" id="NF011694">
    <property type="entry name" value="PRK15114.1"/>
    <property type="match status" value="1"/>
</dbReference>
<dbReference type="NCBIfam" id="TIGR00050">
    <property type="entry name" value="rRNA_methyl_1"/>
    <property type="match status" value="1"/>
</dbReference>
<dbReference type="PANTHER" id="PTHR42786:SF2">
    <property type="entry name" value="TRNA (CYTIDINE_URIDINE-2'-O-)-METHYLTRANSFERASE TRMJ"/>
    <property type="match status" value="1"/>
</dbReference>
<dbReference type="PANTHER" id="PTHR42786">
    <property type="entry name" value="TRNA/RRNA METHYLTRANSFERASE"/>
    <property type="match status" value="1"/>
</dbReference>
<dbReference type="Pfam" id="PF00588">
    <property type="entry name" value="SpoU_methylase"/>
    <property type="match status" value="1"/>
</dbReference>
<dbReference type="PIRSF" id="PIRSF004808">
    <property type="entry name" value="LasT"/>
    <property type="match status" value="1"/>
</dbReference>
<dbReference type="SUPFAM" id="SSF75217">
    <property type="entry name" value="alpha/beta knot"/>
    <property type="match status" value="1"/>
</dbReference>
<reference key="1">
    <citation type="journal article" date="2004" name="Nat. Genet.">
        <title>Comparison of genome degradation in Paratyphi A and Typhi, human-restricted serovars of Salmonella enterica that cause typhoid.</title>
        <authorList>
            <person name="McClelland M."/>
            <person name="Sanderson K.E."/>
            <person name="Clifton S.W."/>
            <person name="Latreille P."/>
            <person name="Porwollik S."/>
            <person name="Sabo A."/>
            <person name="Meyer R."/>
            <person name="Bieri T."/>
            <person name="Ozersky P."/>
            <person name="McLellan M."/>
            <person name="Harkins C.R."/>
            <person name="Wang C."/>
            <person name="Nguyen C."/>
            <person name="Berghoff A."/>
            <person name="Elliott G."/>
            <person name="Kohlberg S."/>
            <person name="Strong C."/>
            <person name="Du F."/>
            <person name="Carter J."/>
            <person name="Kremizki C."/>
            <person name="Layman D."/>
            <person name="Leonard S."/>
            <person name="Sun H."/>
            <person name="Fulton L."/>
            <person name="Nash W."/>
            <person name="Miner T."/>
            <person name="Minx P."/>
            <person name="Delehaunty K."/>
            <person name="Fronick C."/>
            <person name="Magrini V."/>
            <person name="Nhan M."/>
            <person name="Warren W."/>
            <person name="Florea L."/>
            <person name="Spieth J."/>
            <person name="Wilson R.K."/>
        </authorList>
    </citation>
    <scope>NUCLEOTIDE SEQUENCE [LARGE SCALE GENOMIC DNA]</scope>
    <source>
        <strain>ATCC 9150 / SARB42</strain>
    </source>
</reference>
<gene>
    <name type="primary">trmJ</name>
    <name type="ordered locus">SPA0321</name>
</gene>